<accession>B1KDU6</accession>
<evidence type="ECO:0000255" key="1">
    <source>
        <dbReference type="HAMAP-Rule" id="MF_00061"/>
    </source>
</evidence>
<comment type="function">
    <text evidence="1">Catalyzes the phosphorylation of the position 2 hydroxy group of 4-diphosphocytidyl-2C-methyl-D-erythritol.</text>
</comment>
<comment type="catalytic activity">
    <reaction evidence="1">
        <text>4-CDP-2-C-methyl-D-erythritol + ATP = 4-CDP-2-C-methyl-D-erythritol 2-phosphate + ADP + H(+)</text>
        <dbReference type="Rhea" id="RHEA:18437"/>
        <dbReference type="ChEBI" id="CHEBI:15378"/>
        <dbReference type="ChEBI" id="CHEBI:30616"/>
        <dbReference type="ChEBI" id="CHEBI:57823"/>
        <dbReference type="ChEBI" id="CHEBI:57919"/>
        <dbReference type="ChEBI" id="CHEBI:456216"/>
        <dbReference type="EC" id="2.7.1.148"/>
    </reaction>
</comment>
<comment type="pathway">
    <text evidence="1">Isoprenoid biosynthesis; isopentenyl diphosphate biosynthesis via DXP pathway; isopentenyl diphosphate from 1-deoxy-D-xylulose 5-phosphate: step 3/6.</text>
</comment>
<comment type="similarity">
    <text evidence="1">Belongs to the GHMP kinase family. IspE subfamily.</text>
</comment>
<feature type="chain" id="PRO_1000092115" description="4-diphosphocytidyl-2-C-methyl-D-erythritol kinase">
    <location>
        <begin position="1"/>
        <end position="284"/>
    </location>
</feature>
<feature type="active site" evidence="1">
    <location>
        <position position="14"/>
    </location>
</feature>
<feature type="active site" evidence="1">
    <location>
        <position position="140"/>
    </location>
</feature>
<feature type="binding site" evidence="1">
    <location>
        <begin position="98"/>
        <end position="108"/>
    </location>
    <ligand>
        <name>ATP</name>
        <dbReference type="ChEBI" id="CHEBI:30616"/>
    </ligand>
</feature>
<sequence>MSNQLSLGWPAPAKLNLFLHVNHRREDGYHELQTLFQFISHGDLLDFKVTDDGSLKLHSNIGNVVADSDNLILRAAKLLQERTATEKGAEIWLDKRLPMGGGIGGGSSDAATCLIALNALWQTHLSRDELAELGLALGADVPVFINGLSAFAEGVGEKLIQVSPKEYWYLVLVPDVHVSTAEIFQDPDLPRNTPKLDLDSLMSSPWRNDCQELVVKRYPQVAKTLDWLIEYAPSRMTGTGACVFGEFEQQQQAQDALAQLPSNMTGFVAKGTNISPLELRLAQL</sequence>
<gene>
    <name evidence="1" type="primary">ispE</name>
    <name type="ordered locus">Swoo_3688</name>
</gene>
<reference key="1">
    <citation type="submission" date="2008-02" db="EMBL/GenBank/DDBJ databases">
        <title>Complete sequence of Shewanella woodyi ATCC 51908.</title>
        <authorList>
            <consortium name="US DOE Joint Genome Institute"/>
            <person name="Copeland A."/>
            <person name="Lucas S."/>
            <person name="Lapidus A."/>
            <person name="Glavina del Rio T."/>
            <person name="Dalin E."/>
            <person name="Tice H."/>
            <person name="Bruce D."/>
            <person name="Goodwin L."/>
            <person name="Pitluck S."/>
            <person name="Sims D."/>
            <person name="Brettin T."/>
            <person name="Detter J.C."/>
            <person name="Han C."/>
            <person name="Kuske C.R."/>
            <person name="Schmutz J."/>
            <person name="Larimer F."/>
            <person name="Land M."/>
            <person name="Hauser L."/>
            <person name="Kyrpides N."/>
            <person name="Lykidis A."/>
            <person name="Zhao J.-S."/>
            <person name="Richardson P."/>
        </authorList>
    </citation>
    <scope>NUCLEOTIDE SEQUENCE [LARGE SCALE GENOMIC DNA]</scope>
    <source>
        <strain>ATCC 51908 / MS32</strain>
    </source>
</reference>
<dbReference type="EC" id="2.7.1.148" evidence="1"/>
<dbReference type="EMBL" id="CP000961">
    <property type="protein sequence ID" value="ACA87948.1"/>
    <property type="molecule type" value="Genomic_DNA"/>
</dbReference>
<dbReference type="RefSeq" id="WP_012326280.1">
    <property type="nucleotide sequence ID" value="NC_010506.1"/>
</dbReference>
<dbReference type="SMR" id="B1KDU6"/>
<dbReference type="STRING" id="392500.Swoo_3688"/>
<dbReference type="KEGG" id="swd:Swoo_3688"/>
<dbReference type="eggNOG" id="COG1947">
    <property type="taxonomic scope" value="Bacteria"/>
</dbReference>
<dbReference type="HOGENOM" id="CLU_053057_3_0_6"/>
<dbReference type="UniPathway" id="UPA00056">
    <property type="reaction ID" value="UER00094"/>
</dbReference>
<dbReference type="Proteomes" id="UP000002168">
    <property type="component" value="Chromosome"/>
</dbReference>
<dbReference type="GO" id="GO:0050515">
    <property type="term" value="F:4-(cytidine 5'-diphospho)-2-C-methyl-D-erythritol kinase activity"/>
    <property type="evidence" value="ECO:0007669"/>
    <property type="project" value="UniProtKB-UniRule"/>
</dbReference>
<dbReference type="GO" id="GO:0005524">
    <property type="term" value="F:ATP binding"/>
    <property type="evidence" value="ECO:0007669"/>
    <property type="project" value="UniProtKB-UniRule"/>
</dbReference>
<dbReference type="GO" id="GO:0019288">
    <property type="term" value="P:isopentenyl diphosphate biosynthetic process, methylerythritol 4-phosphate pathway"/>
    <property type="evidence" value="ECO:0007669"/>
    <property type="project" value="UniProtKB-UniRule"/>
</dbReference>
<dbReference type="GO" id="GO:0016114">
    <property type="term" value="P:terpenoid biosynthetic process"/>
    <property type="evidence" value="ECO:0007669"/>
    <property type="project" value="InterPro"/>
</dbReference>
<dbReference type="Gene3D" id="3.30.230.10">
    <property type="match status" value="1"/>
</dbReference>
<dbReference type="Gene3D" id="3.30.70.890">
    <property type="entry name" value="GHMP kinase, C-terminal domain"/>
    <property type="match status" value="1"/>
</dbReference>
<dbReference type="HAMAP" id="MF_00061">
    <property type="entry name" value="IspE"/>
    <property type="match status" value="1"/>
</dbReference>
<dbReference type="InterPro" id="IPR013750">
    <property type="entry name" value="GHMP_kinase_C_dom"/>
</dbReference>
<dbReference type="InterPro" id="IPR036554">
    <property type="entry name" value="GHMP_kinase_C_sf"/>
</dbReference>
<dbReference type="InterPro" id="IPR006204">
    <property type="entry name" value="GHMP_kinase_N_dom"/>
</dbReference>
<dbReference type="InterPro" id="IPR004424">
    <property type="entry name" value="IspE"/>
</dbReference>
<dbReference type="InterPro" id="IPR020568">
    <property type="entry name" value="Ribosomal_Su5_D2-typ_SF"/>
</dbReference>
<dbReference type="InterPro" id="IPR014721">
    <property type="entry name" value="Ribsml_uS5_D2-typ_fold_subgr"/>
</dbReference>
<dbReference type="NCBIfam" id="TIGR00154">
    <property type="entry name" value="ispE"/>
    <property type="match status" value="1"/>
</dbReference>
<dbReference type="NCBIfam" id="NF011202">
    <property type="entry name" value="PRK14608.1"/>
    <property type="match status" value="1"/>
</dbReference>
<dbReference type="PANTHER" id="PTHR43527">
    <property type="entry name" value="4-DIPHOSPHOCYTIDYL-2-C-METHYL-D-ERYTHRITOL KINASE, CHLOROPLASTIC"/>
    <property type="match status" value="1"/>
</dbReference>
<dbReference type="PANTHER" id="PTHR43527:SF2">
    <property type="entry name" value="4-DIPHOSPHOCYTIDYL-2-C-METHYL-D-ERYTHRITOL KINASE, CHLOROPLASTIC"/>
    <property type="match status" value="1"/>
</dbReference>
<dbReference type="Pfam" id="PF08544">
    <property type="entry name" value="GHMP_kinases_C"/>
    <property type="match status" value="1"/>
</dbReference>
<dbReference type="Pfam" id="PF00288">
    <property type="entry name" value="GHMP_kinases_N"/>
    <property type="match status" value="1"/>
</dbReference>
<dbReference type="PIRSF" id="PIRSF010376">
    <property type="entry name" value="IspE"/>
    <property type="match status" value="1"/>
</dbReference>
<dbReference type="SUPFAM" id="SSF55060">
    <property type="entry name" value="GHMP Kinase, C-terminal domain"/>
    <property type="match status" value="1"/>
</dbReference>
<dbReference type="SUPFAM" id="SSF54211">
    <property type="entry name" value="Ribosomal protein S5 domain 2-like"/>
    <property type="match status" value="1"/>
</dbReference>
<name>ISPE_SHEWM</name>
<organism>
    <name type="scientific">Shewanella woodyi (strain ATCC 51908 / MS32)</name>
    <dbReference type="NCBI Taxonomy" id="392500"/>
    <lineage>
        <taxon>Bacteria</taxon>
        <taxon>Pseudomonadati</taxon>
        <taxon>Pseudomonadota</taxon>
        <taxon>Gammaproteobacteria</taxon>
        <taxon>Alteromonadales</taxon>
        <taxon>Shewanellaceae</taxon>
        <taxon>Shewanella</taxon>
    </lineage>
</organism>
<protein>
    <recommendedName>
        <fullName evidence="1">4-diphosphocytidyl-2-C-methyl-D-erythritol kinase</fullName>
        <shortName evidence="1">CMK</shortName>
        <ecNumber evidence="1">2.7.1.148</ecNumber>
    </recommendedName>
    <alternativeName>
        <fullName evidence="1">4-(cytidine-5'-diphospho)-2-C-methyl-D-erythritol kinase</fullName>
    </alternativeName>
</protein>
<keyword id="KW-0067">ATP-binding</keyword>
<keyword id="KW-0414">Isoprene biosynthesis</keyword>
<keyword id="KW-0418">Kinase</keyword>
<keyword id="KW-0547">Nucleotide-binding</keyword>
<keyword id="KW-1185">Reference proteome</keyword>
<keyword id="KW-0808">Transferase</keyword>
<proteinExistence type="inferred from homology"/>